<feature type="chain" id="PRO_0000196654" description="Putative pyruvate, phosphate dikinase regulatory protein">
    <location>
        <begin position="1"/>
        <end position="273"/>
    </location>
</feature>
<feature type="binding site" evidence="1">
    <location>
        <begin position="153"/>
        <end position="160"/>
    </location>
    <ligand>
        <name>ADP</name>
        <dbReference type="ChEBI" id="CHEBI:456216"/>
    </ligand>
</feature>
<organism>
    <name type="scientific">Ehrlichia ruminantium (strain Welgevonden)</name>
    <dbReference type="NCBI Taxonomy" id="254945"/>
    <lineage>
        <taxon>Bacteria</taxon>
        <taxon>Pseudomonadati</taxon>
        <taxon>Pseudomonadota</taxon>
        <taxon>Alphaproteobacteria</taxon>
        <taxon>Rickettsiales</taxon>
        <taxon>Anaplasmataceae</taxon>
        <taxon>Ehrlichia</taxon>
    </lineage>
</organism>
<proteinExistence type="inferred from homology"/>
<keyword id="KW-0418">Kinase</keyword>
<keyword id="KW-0547">Nucleotide-binding</keyword>
<keyword id="KW-0723">Serine/threonine-protein kinase</keyword>
<keyword id="KW-0808">Transferase</keyword>
<evidence type="ECO:0000255" key="1">
    <source>
        <dbReference type="HAMAP-Rule" id="MF_00921"/>
    </source>
</evidence>
<evidence type="ECO:0000305" key="2"/>
<dbReference type="EC" id="2.7.11.32" evidence="1"/>
<dbReference type="EC" id="2.7.4.27" evidence="1"/>
<dbReference type="EMBL" id="CR767821">
    <property type="protein sequence ID" value="CAH57923.1"/>
    <property type="status" value="ALT_INIT"/>
    <property type="molecule type" value="Genomic_DNA"/>
</dbReference>
<dbReference type="EMBL" id="CR925678">
    <property type="protein sequence ID" value="CAI26701.1"/>
    <property type="status" value="ALT_INIT"/>
    <property type="molecule type" value="Genomic_DNA"/>
</dbReference>
<dbReference type="RefSeq" id="WP_044148616.1">
    <property type="nucleotide sequence ID" value="NC_005295.2"/>
</dbReference>
<dbReference type="SMR" id="Q5HBX0"/>
<dbReference type="GeneID" id="33057653"/>
<dbReference type="KEGG" id="eru:Erum2050"/>
<dbReference type="KEGG" id="erw:ERWE_CDS_02070"/>
<dbReference type="eggNOG" id="COG1806">
    <property type="taxonomic scope" value="Bacteria"/>
</dbReference>
<dbReference type="HOGENOM" id="CLU_046206_2_0_5"/>
<dbReference type="Proteomes" id="UP000001021">
    <property type="component" value="Chromosome"/>
</dbReference>
<dbReference type="GO" id="GO:0043531">
    <property type="term" value="F:ADP binding"/>
    <property type="evidence" value="ECO:0007669"/>
    <property type="project" value="UniProtKB-UniRule"/>
</dbReference>
<dbReference type="GO" id="GO:0005524">
    <property type="term" value="F:ATP binding"/>
    <property type="evidence" value="ECO:0007669"/>
    <property type="project" value="InterPro"/>
</dbReference>
<dbReference type="GO" id="GO:0016776">
    <property type="term" value="F:phosphotransferase activity, phosphate group as acceptor"/>
    <property type="evidence" value="ECO:0007669"/>
    <property type="project" value="UniProtKB-UniRule"/>
</dbReference>
<dbReference type="GO" id="GO:0004674">
    <property type="term" value="F:protein serine/threonine kinase activity"/>
    <property type="evidence" value="ECO:0007669"/>
    <property type="project" value="UniProtKB-UniRule"/>
</dbReference>
<dbReference type="HAMAP" id="MF_00921">
    <property type="entry name" value="PDRP"/>
    <property type="match status" value="1"/>
</dbReference>
<dbReference type="InterPro" id="IPR005177">
    <property type="entry name" value="Kinase-pyrophosphorylase"/>
</dbReference>
<dbReference type="InterPro" id="IPR026565">
    <property type="entry name" value="PPDK_reg"/>
</dbReference>
<dbReference type="NCBIfam" id="NF003742">
    <property type="entry name" value="PRK05339.1"/>
    <property type="match status" value="1"/>
</dbReference>
<dbReference type="PANTHER" id="PTHR31756">
    <property type="entry name" value="PYRUVATE, PHOSPHATE DIKINASE REGULATORY PROTEIN 1, CHLOROPLASTIC"/>
    <property type="match status" value="1"/>
</dbReference>
<dbReference type="PANTHER" id="PTHR31756:SF3">
    <property type="entry name" value="PYRUVATE, PHOSPHATE DIKINASE REGULATORY PROTEIN 1, CHLOROPLASTIC"/>
    <property type="match status" value="1"/>
</dbReference>
<dbReference type="Pfam" id="PF03618">
    <property type="entry name" value="Kinase-PPPase"/>
    <property type="match status" value="1"/>
</dbReference>
<comment type="function">
    <text evidence="1">Bifunctional serine/threonine kinase and phosphorylase involved in the regulation of the pyruvate, phosphate dikinase (PPDK) by catalyzing its phosphorylation/dephosphorylation.</text>
</comment>
<comment type="catalytic activity">
    <reaction evidence="1">
        <text>N(tele)-phospho-L-histidyl/L-threonyl-[pyruvate, phosphate dikinase] + ADP = N(tele)-phospho-L-histidyl/O-phospho-L-threonyl-[pyruvate, phosphate dikinase] + AMP + H(+)</text>
        <dbReference type="Rhea" id="RHEA:43692"/>
        <dbReference type="Rhea" id="RHEA-COMP:10650"/>
        <dbReference type="Rhea" id="RHEA-COMP:10651"/>
        <dbReference type="ChEBI" id="CHEBI:15378"/>
        <dbReference type="ChEBI" id="CHEBI:30013"/>
        <dbReference type="ChEBI" id="CHEBI:61977"/>
        <dbReference type="ChEBI" id="CHEBI:83586"/>
        <dbReference type="ChEBI" id="CHEBI:456215"/>
        <dbReference type="ChEBI" id="CHEBI:456216"/>
        <dbReference type="EC" id="2.7.11.32"/>
    </reaction>
</comment>
<comment type="catalytic activity">
    <reaction evidence="1">
        <text>N(tele)-phospho-L-histidyl/O-phospho-L-threonyl-[pyruvate, phosphate dikinase] + phosphate + H(+) = N(tele)-phospho-L-histidyl/L-threonyl-[pyruvate, phosphate dikinase] + diphosphate</text>
        <dbReference type="Rhea" id="RHEA:43696"/>
        <dbReference type="Rhea" id="RHEA-COMP:10650"/>
        <dbReference type="Rhea" id="RHEA-COMP:10651"/>
        <dbReference type="ChEBI" id="CHEBI:15378"/>
        <dbReference type="ChEBI" id="CHEBI:30013"/>
        <dbReference type="ChEBI" id="CHEBI:33019"/>
        <dbReference type="ChEBI" id="CHEBI:43474"/>
        <dbReference type="ChEBI" id="CHEBI:61977"/>
        <dbReference type="ChEBI" id="CHEBI:83586"/>
        <dbReference type="EC" id="2.7.4.27"/>
    </reaction>
</comment>
<comment type="similarity">
    <text evidence="1">Belongs to the pyruvate, phosphate/water dikinase regulatory protein family. PDRP subfamily.</text>
</comment>
<comment type="sequence caution" evidence="2">
    <conflict type="erroneous initiation">
        <sequence resource="EMBL-CDS" id="CAH57923"/>
    </conflict>
</comment>
<comment type="sequence caution" evidence="2">
    <conflict type="erroneous initiation">
        <sequence resource="EMBL-CDS" id="CAI26701"/>
    </conflict>
</comment>
<reference key="1">
    <citation type="journal article" date="2005" name="Proc. Natl. Acad. Sci. U.S.A.">
        <title>The genome of the heartwater agent Ehrlichia ruminantium contains multiple tandem repeats of actively variable copy number.</title>
        <authorList>
            <person name="Collins N.E."/>
            <person name="Liebenberg J."/>
            <person name="de Villiers E.P."/>
            <person name="Brayton K.A."/>
            <person name="Louw E."/>
            <person name="Pretorius A."/>
            <person name="Faber F.E."/>
            <person name="van Heerden H."/>
            <person name="Josemans A."/>
            <person name="van Kleef M."/>
            <person name="Steyn H.C."/>
            <person name="van Strijp M.F."/>
            <person name="Zweygarth E."/>
            <person name="Jongejan F."/>
            <person name="Maillard J.C."/>
            <person name="Berthier D."/>
            <person name="Botha M."/>
            <person name="Joubert F."/>
            <person name="Corton C.H."/>
            <person name="Thomson N.R."/>
            <person name="Allsopp M.T."/>
            <person name="Allsopp B.A."/>
        </authorList>
    </citation>
    <scope>NUCLEOTIDE SEQUENCE [LARGE SCALE GENOMIC DNA]</scope>
    <source>
        <strain>Welgevonden</strain>
    </source>
</reference>
<reference key="2">
    <citation type="journal article" date="2006" name="J. Bacteriol.">
        <title>Comparative genomic analysis of three strains of Ehrlichia ruminantium reveals an active process of genome size plasticity.</title>
        <authorList>
            <person name="Frutos R."/>
            <person name="Viari A."/>
            <person name="Ferraz C."/>
            <person name="Morgat A."/>
            <person name="Eychenie S."/>
            <person name="Kandassamy Y."/>
            <person name="Chantal I."/>
            <person name="Bensaid A."/>
            <person name="Coissac E."/>
            <person name="Vachiery N."/>
            <person name="Demaille J."/>
            <person name="Martinez D."/>
        </authorList>
    </citation>
    <scope>NUCLEOTIDE SEQUENCE [LARGE SCALE GENOMIC DNA]</scope>
    <source>
        <strain>Welgevonden</strain>
    </source>
</reference>
<gene>
    <name type="ordered locus">Erum2050</name>
    <name type="ordered locus">ERWE_CDS_02070</name>
</gene>
<name>PDRP_EHRRW</name>
<protein>
    <recommendedName>
        <fullName evidence="1">Putative pyruvate, phosphate dikinase regulatory protein</fullName>
        <shortName evidence="1">PPDK regulatory protein</shortName>
        <ecNumber evidence="1">2.7.11.32</ecNumber>
        <ecNumber evidence="1">2.7.4.27</ecNumber>
    </recommendedName>
</protein>
<accession>Q5HBX0</accession>
<accession>Q5FCZ8</accession>
<sequence>MSNPVVLNLHLISDSTCETVAAVARSALEHFKSVEVNEFVWSCINSYEQIDKIMLTIEKDKYNFIMYTMFDDDIRKYLKQKAGIHEIPCIPILSHVIREISCYLNIKKDPYINTSIGLDDEYFTRIDAINYTIAHDDGQNLWDIDQADIIILGVSRTSKSPTSIYLAYRGYRVVNIPLINSIELSVDLSKMKNKLIVGLTIDIDRLIEIRRARLVSMKNQNNYGYVDYEHVLMEIRETKKICAKNGWPIIDVTQKSVEEIAATIIQYFTKMQH</sequence>